<organism>
    <name type="scientific">Mus musculus</name>
    <name type="common">Mouse</name>
    <dbReference type="NCBI Taxonomy" id="10090"/>
    <lineage>
        <taxon>Eukaryota</taxon>
        <taxon>Metazoa</taxon>
        <taxon>Chordata</taxon>
        <taxon>Craniata</taxon>
        <taxon>Vertebrata</taxon>
        <taxon>Euteleostomi</taxon>
        <taxon>Mammalia</taxon>
        <taxon>Eutheria</taxon>
        <taxon>Euarchontoglires</taxon>
        <taxon>Glires</taxon>
        <taxon>Rodentia</taxon>
        <taxon>Myomorpha</taxon>
        <taxon>Muroidea</taxon>
        <taxon>Muridae</taxon>
        <taxon>Murinae</taxon>
        <taxon>Mus</taxon>
        <taxon>Mus</taxon>
    </lineage>
</organism>
<accession>Q0P5W1</accession>
<accession>Q3UR93</accession>
<accession>Q80TR5</accession>
<accession>Q8K280</accession>
<sequence>METEPDQEHLDQNPCARTVEEELSKSFNLEASLSKFSCLDLDKELEFRSDLIDDKEFDIPQVDTPPTLESILNETDDEDESFVLEDPTLLNVDTIDSHSYDTSSVASSDSGDRANLKRKKKLPDSFSLHGSVMRHSLLKGISAQIVSAADKVDAGLPTAIAVSSLIAVGTSHGLALIFDQNQALRLCLGSTSVGGQYGAISALSINNDCSRLLCGFAKGQITMWDLASGKLLRSITDAHPPGTAILHIKFTDDPTLAICNDSGGSVFELTFKRVMGVRTCESRCLFSGSKGEVCCIEPLHSKPELKDHPITQFSLLAMASLTKILVIGLKPSLKVWMTFPYGRMDPSSVPLLAWHFVAVNNSVNPMLAFCRGDMVHFLLVKRDESGAIHVTKQKHLHLYYDLINFTWINSRTVVLLDSVEKLHVIDRQTQEELETMEISEVQLVYNSSHFKSLATGGNVSQALALVGEKACYQSISSYGGQIFYLGTKSVYVMMLRSWRERMDHLLKQDCLTEALALAWSFHEGKAKAVVGLSGDVSKRKAVVADRMVEILFHYADRALKKCPDQGKIQVMEQHFQDTVPVIVDYCLLLQRKDLLFGQMYDKLSENSVAKGVFLECLEPYILSDKLVGITPQVMKDLIVHFQDKKLLENVEALIVHMDITSLDIQQVVLMCWENRLYDAMVYVYNRGMNEFISPMEKLFKVIAPPLNAGKTLTDEQVVMGNKLLVYISCCLAGRAYPLGDIPEDLVPLVKNQVFEFLIRLHSVEASSEEEVYPYVRTLLHFDTREFLNVLALTFEDFKNDKQAVEYQQRIVDILLKVMVENSDFTPSQVGCLFTFLARQLAKPDNTLFVNRTLFDQVLEFLCSPDDDSRHSERQQVLLELLQAGGIVQFEESRLIRMAEKAEFYQICEFMYEREHQYDKIIDCYLHDPLREEEVFNYIHNILSIPGHSAEEKQSVWQKAMNHMEELVSLKPCKAAELVATHFSEQIEVVIGQLQNQLLLFKFLRSLLDPREGVHVNQELLQIPPHITEQFIELLCQFSPDQVIQTLQVLECYRLEETIQITQKYQLHEVTAYLLEKKGDAHGAFLLLLERLQSRLQEMTRQDENTKEDILLKGVEDTMVETIALCQRNSQNLNQQQREALWFPLLEAMMTPQKLSSSAAAPHPHCEALKSLTMQVLNSMAAFIALPSILQRILQDPIYGKGKLGEIQGLILGMLDTFNYEQTLLETTASLLNQDLHWSLCNLRASVSRGLNPKQDYCSICLQQYKRRQEMADEIIVFSCGHLYHSFCLQSKECTLEVEGQTRWACHKCSSSNKAGKLSENPSENKKGRITSSQVKMSPSYHQSKGDPPARKANSEPVLDPQQMQAFDQLCRLYRGSSRLALLTELSQNRGGDSCRPFAGPQSGPAFNSVFQKENFQLQLAPPPVAED</sequence>
<keyword id="KW-0025">Alternative splicing</keyword>
<keyword id="KW-0479">Metal-binding</keyword>
<keyword id="KW-0597">Phosphoprotein</keyword>
<keyword id="KW-1185">Reference proteome</keyword>
<keyword id="KW-0853">WD repeat</keyword>
<keyword id="KW-0862">Zinc</keyword>
<keyword id="KW-0863">Zinc-finger</keyword>
<gene>
    <name type="primary">Vps8</name>
    <name type="synonym">Kiaa0804</name>
</gene>
<dbReference type="EMBL" id="AK122375">
    <property type="protein sequence ID" value="BAC65657.1"/>
    <property type="status" value="ALT_INIT"/>
    <property type="molecule type" value="mRNA"/>
</dbReference>
<dbReference type="EMBL" id="AK029007">
    <property type="protein sequence ID" value="BAC26237.1"/>
    <property type="status" value="ALT_FRAME"/>
    <property type="molecule type" value="mRNA"/>
</dbReference>
<dbReference type="EMBL" id="AK141678">
    <property type="protein sequence ID" value="BAE24795.1"/>
    <property type="molecule type" value="mRNA"/>
</dbReference>
<dbReference type="EMBL" id="BC032214">
    <property type="protein sequence ID" value="AAH32214.1"/>
    <property type="status" value="ALT_INIT"/>
    <property type="molecule type" value="mRNA"/>
</dbReference>
<dbReference type="EMBL" id="BC055323">
    <property type="protein sequence ID" value="AAH55323.1"/>
    <property type="molecule type" value="mRNA"/>
</dbReference>
<dbReference type="CCDS" id="CCDS70700.1">
    <molecule id="Q0P5W1-3"/>
</dbReference>
<dbReference type="CCDS" id="CCDS70701.1">
    <molecule id="Q0P5W1-1"/>
</dbReference>
<dbReference type="RefSeq" id="NP_001272822.1">
    <molecule id="Q0P5W1-1"/>
    <property type="nucleotide sequence ID" value="NM_001285893.1"/>
</dbReference>
<dbReference type="RefSeq" id="NP_001272823.1">
    <molecule id="Q0P5W1-3"/>
    <property type="nucleotide sequence ID" value="NM_001285894.1"/>
</dbReference>
<dbReference type="RefSeq" id="XP_036015754.1">
    <molecule id="Q0P5W1-1"/>
    <property type="nucleotide sequence ID" value="XM_036159861.1"/>
</dbReference>
<dbReference type="RefSeq" id="XP_036015755.1">
    <molecule id="Q0P5W1-1"/>
    <property type="nucleotide sequence ID" value="XM_036159862.1"/>
</dbReference>
<dbReference type="SMR" id="Q0P5W1"/>
<dbReference type="BioGRID" id="229039">
    <property type="interactions" value="5"/>
</dbReference>
<dbReference type="FunCoup" id="Q0P5W1">
    <property type="interactions" value="2434"/>
</dbReference>
<dbReference type="IntAct" id="Q0P5W1">
    <property type="interactions" value="1"/>
</dbReference>
<dbReference type="STRING" id="10090.ENSMUSP00000112937"/>
<dbReference type="iPTMnet" id="Q0P5W1"/>
<dbReference type="PhosphoSitePlus" id="Q0P5W1"/>
<dbReference type="PaxDb" id="10090-ENSMUSP00000093905"/>
<dbReference type="PeptideAtlas" id="Q0P5W1"/>
<dbReference type="ProteomicsDB" id="297586">
    <molecule id="Q0P5W1-1"/>
</dbReference>
<dbReference type="ProteomicsDB" id="297587">
    <molecule id="Q0P5W1-2"/>
</dbReference>
<dbReference type="ProteomicsDB" id="297588">
    <molecule id="Q0P5W1-3"/>
</dbReference>
<dbReference type="Pumba" id="Q0P5W1"/>
<dbReference type="Antibodypedia" id="33827">
    <property type="antibodies" value="79 antibodies from 20 providers"/>
</dbReference>
<dbReference type="DNASU" id="209018"/>
<dbReference type="Ensembl" id="ENSMUST00000096191.11">
    <molecule id="Q0P5W1-2"/>
    <property type="protein sequence ID" value="ENSMUSP00000093905.5"/>
    <property type="gene ID" value="ENSMUSG00000033653.20"/>
</dbReference>
<dbReference type="Ensembl" id="ENSMUST00000117598.8">
    <molecule id="Q0P5W1-1"/>
    <property type="protein sequence ID" value="ENSMUSP00000112937.2"/>
    <property type="gene ID" value="ENSMUSG00000033653.20"/>
</dbReference>
<dbReference type="Ensembl" id="ENSMUST00000118923.8">
    <molecule id="Q0P5W1-3"/>
    <property type="protein sequence ID" value="ENSMUSP00000112636.2"/>
    <property type="gene ID" value="ENSMUSG00000033653.20"/>
</dbReference>
<dbReference type="GeneID" id="209018"/>
<dbReference type="KEGG" id="mmu:209018"/>
<dbReference type="UCSC" id="uc007yrj.2">
    <molecule id="Q0P5W1-1"/>
    <property type="organism name" value="mouse"/>
</dbReference>
<dbReference type="UCSC" id="uc012adi.2">
    <molecule id="Q0P5W1-3"/>
    <property type="organism name" value="mouse"/>
</dbReference>
<dbReference type="AGR" id="MGI:2146407"/>
<dbReference type="CTD" id="23355"/>
<dbReference type="MGI" id="MGI:2146407">
    <property type="gene designation" value="Vps8"/>
</dbReference>
<dbReference type="VEuPathDB" id="HostDB:ENSMUSG00000033653"/>
<dbReference type="eggNOG" id="KOG2079">
    <property type="taxonomic scope" value="Eukaryota"/>
</dbReference>
<dbReference type="GeneTree" id="ENSGT00390000010672"/>
<dbReference type="HOGENOM" id="CLU_000917_1_2_1"/>
<dbReference type="InParanoid" id="Q0P5W1"/>
<dbReference type="OMA" id="NQLFFHQ"/>
<dbReference type="OrthoDB" id="289913at2759"/>
<dbReference type="TreeFam" id="TF314244"/>
<dbReference type="BioGRID-ORCS" id="209018">
    <property type="hits" value="2 hits in 72 CRISPR screens"/>
</dbReference>
<dbReference type="ChiTaRS" id="Vps8">
    <property type="organism name" value="mouse"/>
</dbReference>
<dbReference type="PRO" id="PR:Q0P5W1"/>
<dbReference type="Proteomes" id="UP000000589">
    <property type="component" value="Chromosome 16"/>
</dbReference>
<dbReference type="RNAct" id="Q0P5W1">
    <property type="molecule type" value="protein"/>
</dbReference>
<dbReference type="Bgee" id="ENSMUSG00000033653">
    <property type="expression patterns" value="Expressed in proximal tubule and 227 other cell types or tissues"/>
</dbReference>
<dbReference type="ExpressionAtlas" id="Q0P5W1">
    <property type="expression patterns" value="baseline and differential"/>
</dbReference>
<dbReference type="GO" id="GO:0033263">
    <property type="term" value="C:CORVET complex"/>
    <property type="evidence" value="ECO:0000314"/>
    <property type="project" value="UniProtKB"/>
</dbReference>
<dbReference type="GO" id="GO:0005769">
    <property type="term" value="C:early endosome"/>
    <property type="evidence" value="ECO:0007669"/>
    <property type="project" value="Ensembl"/>
</dbReference>
<dbReference type="GO" id="GO:0008270">
    <property type="term" value="F:zinc ion binding"/>
    <property type="evidence" value="ECO:0007669"/>
    <property type="project" value="UniProtKB-KW"/>
</dbReference>
<dbReference type="GO" id="GO:0034058">
    <property type="term" value="P:endosomal vesicle fusion"/>
    <property type="evidence" value="ECO:0007669"/>
    <property type="project" value="Ensembl"/>
</dbReference>
<dbReference type="GO" id="GO:0006623">
    <property type="term" value="P:protein targeting to vacuole"/>
    <property type="evidence" value="ECO:0007669"/>
    <property type="project" value="InterPro"/>
</dbReference>
<dbReference type="CDD" id="cd16687">
    <property type="entry name" value="RING-H2_Vps8"/>
    <property type="match status" value="1"/>
</dbReference>
<dbReference type="FunFam" id="2.130.10.10:FF:000162">
    <property type="entry name" value="vacuolar protein sorting-associated protein 8 homolog"/>
    <property type="match status" value="1"/>
</dbReference>
<dbReference type="Gene3D" id="2.130.10.10">
    <property type="entry name" value="YVTN repeat-like/Quinoprotein amine dehydrogenase"/>
    <property type="match status" value="1"/>
</dbReference>
<dbReference type="Gene3D" id="3.30.40.10">
    <property type="entry name" value="Zinc/RING finger domain, C3HC4 (zinc finger)"/>
    <property type="match status" value="1"/>
</dbReference>
<dbReference type="InterPro" id="IPR045111">
    <property type="entry name" value="Vps41/Vps8"/>
</dbReference>
<dbReference type="InterPro" id="IPR025941">
    <property type="entry name" value="Vps8_central_dom"/>
</dbReference>
<dbReference type="InterPro" id="IPR015943">
    <property type="entry name" value="WD40/YVTN_repeat-like_dom_sf"/>
</dbReference>
<dbReference type="InterPro" id="IPR036322">
    <property type="entry name" value="WD40_repeat_dom_sf"/>
</dbReference>
<dbReference type="InterPro" id="IPR001680">
    <property type="entry name" value="WD40_rpt"/>
</dbReference>
<dbReference type="InterPro" id="IPR001841">
    <property type="entry name" value="Znf_RING"/>
</dbReference>
<dbReference type="InterPro" id="IPR013083">
    <property type="entry name" value="Znf_RING/FYVE/PHD"/>
</dbReference>
<dbReference type="InterPro" id="IPR056939">
    <property type="entry name" value="Znf_RING_Vps8"/>
</dbReference>
<dbReference type="PANTHER" id="PTHR12616">
    <property type="entry name" value="VACUOLAR PROTEIN SORTING VPS41"/>
    <property type="match status" value="1"/>
</dbReference>
<dbReference type="PANTHER" id="PTHR12616:SF8">
    <property type="entry name" value="VACUOLAR PROTEIN SORTING-ASSOCIATED PROTEIN 8 HOMOLOG"/>
    <property type="match status" value="1"/>
</dbReference>
<dbReference type="Pfam" id="PF23410">
    <property type="entry name" value="Beta-prop_VPS8"/>
    <property type="match status" value="1"/>
</dbReference>
<dbReference type="Pfam" id="PF12816">
    <property type="entry name" value="TPR_Vps8"/>
    <property type="match status" value="1"/>
</dbReference>
<dbReference type="Pfam" id="PF23412">
    <property type="entry name" value="zf_RING_Vps8"/>
    <property type="match status" value="1"/>
</dbReference>
<dbReference type="SMART" id="SM00184">
    <property type="entry name" value="RING"/>
    <property type="match status" value="1"/>
</dbReference>
<dbReference type="SUPFAM" id="SSF57850">
    <property type="entry name" value="RING/U-box"/>
    <property type="match status" value="1"/>
</dbReference>
<dbReference type="SUPFAM" id="SSF50978">
    <property type="entry name" value="WD40 repeat-like"/>
    <property type="match status" value="1"/>
</dbReference>
<dbReference type="PROSITE" id="PS50082">
    <property type="entry name" value="WD_REPEATS_2"/>
    <property type="match status" value="1"/>
</dbReference>
<dbReference type="PROSITE" id="PS50294">
    <property type="entry name" value="WD_REPEATS_REGION"/>
    <property type="match status" value="1"/>
</dbReference>
<dbReference type="PROSITE" id="PS50089">
    <property type="entry name" value="ZF_RING_2"/>
    <property type="match status" value="1"/>
</dbReference>
<reference key="1">
    <citation type="journal article" date="2003" name="DNA Res.">
        <title>Prediction of the coding sequences of mouse homologues of KIAA gene: II. The complete nucleotide sequences of 400 mouse KIAA-homologous cDNAs identified by screening of terminal sequences of cDNA clones randomly sampled from size-fractionated libraries.</title>
        <authorList>
            <person name="Okazaki N."/>
            <person name="Kikuno R."/>
            <person name="Ohara R."/>
            <person name="Inamoto S."/>
            <person name="Aizawa H."/>
            <person name="Yuasa S."/>
            <person name="Nakajima D."/>
            <person name="Nagase T."/>
            <person name="Ohara O."/>
            <person name="Koga H."/>
        </authorList>
    </citation>
    <scope>NUCLEOTIDE SEQUENCE [LARGE SCALE MRNA] (ISOFORM 3)</scope>
</reference>
<reference key="2">
    <citation type="journal article" date="2005" name="Science">
        <title>The transcriptional landscape of the mammalian genome.</title>
        <authorList>
            <person name="Carninci P."/>
            <person name="Kasukawa T."/>
            <person name="Katayama S."/>
            <person name="Gough J."/>
            <person name="Frith M.C."/>
            <person name="Maeda N."/>
            <person name="Oyama R."/>
            <person name="Ravasi T."/>
            <person name="Lenhard B."/>
            <person name="Wells C."/>
            <person name="Kodzius R."/>
            <person name="Shimokawa K."/>
            <person name="Bajic V.B."/>
            <person name="Brenner S.E."/>
            <person name="Batalov S."/>
            <person name="Forrest A.R."/>
            <person name="Zavolan M."/>
            <person name="Davis M.J."/>
            <person name="Wilming L.G."/>
            <person name="Aidinis V."/>
            <person name="Allen J.E."/>
            <person name="Ambesi-Impiombato A."/>
            <person name="Apweiler R."/>
            <person name="Aturaliya R.N."/>
            <person name="Bailey T.L."/>
            <person name="Bansal M."/>
            <person name="Baxter L."/>
            <person name="Beisel K.W."/>
            <person name="Bersano T."/>
            <person name="Bono H."/>
            <person name="Chalk A.M."/>
            <person name="Chiu K.P."/>
            <person name="Choudhary V."/>
            <person name="Christoffels A."/>
            <person name="Clutterbuck D.R."/>
            <person name="Crowe M.L."/>
            <person name="Dalla E."/>
            <person name="Dalrymple B.P."/>
            <person name="de Bono B."/>
            <person name="Della Gatta G."/>
            <person name="di Bernardo D."/>
            <person name="Down T."/>
            <person name="Engstrom P."/>
            <person name="Fagiolini M."/>
            <person name="Faulkner G."/>
            <person name="Fletcher C.F."/>
            <person name="Fukushima T."/>
            <person name="Furuno M."/>
            <person name="Futaki S."/>
            <person name="Gariboldi M."/>
            <person name="Georgii-Hemming P."/>
            <person name="Gingeras T.R."/>
            <person name="Gojobori T."/>
            <person name="Green R.E."/>
            <person name="Gustincich S."/>
            <person name="Harbers M."/>
            <person name="Hayashi Y."/>
            <person name="Hensch T.K."/>
            <person name="Hirokawa N."/>
            <person name="Hill D."/>
            <person name="Huminiecki L."/>
            <person name="Iacono M."/>
            <person name="Ikeo K."/>
            <person name="Iwama A."/>
            <person name="Ishikawa T."/>
            <person name="Jakt M."/>
            <person name="Kanapin A."/>
            <person name="Katoh M."/>
            <person name="Kawasawa Y."/>
            <person name="Kelso J."/>
            <person name="Kitamura H."/>
            <person name="Kitano H."/>
            <person name="Kollias G."/>
            <person name="Krishnan S.P."/>
            <person name="Kruger A."/>
            <person name="Kummerfeld S.K."/>
            <person name="Kurochkin I.V."/>
            <person name="Lareau L.F."/>
            <person name="Lazarevic D."/>
            <person name="Lipovich L."/>
            <person name="Liu J."/>
            <person name="Liuni S."/>
            <person name="McWilliam S."/>
            <person name="Madan Babu M."/>
            <person name="Madera M."/>
            <person name="Marchionni L."/>
            <person name="Matsuda H."/>
            <person name="Matsuzawa S."/>
            <person name="Miki H."/>
            <person name="Mignone F."/>
            <person name="Miyake S."/>
            <person name="Morris K."/>
            <person name="Mottagui-Tabar S."/>
            <person name="Mulder N."/>
            <person name="Nakano N."/>
            <person name="Nakauchi H."/>
            <person name="Ng P."/>
            <person name="Nilsson R."/>
            <person name="Nishiguchi S."/>
            <person name="Nishikawa S."/>
            <person name="Nori F."/>
            <person name="Ohara O."/>
            <person name="Okazaki Y."/>
            <person name="Orlando V."/>
            <person name="Pang K.C."/>
            <person name="Pavan W.J."/>
            <person name="Pavesi G."/>
            <person name="Pesole G."/>
            <person name="Petrovsky N."/>
            <person name="Piazza S."/>
            <person name="Reed J."/>
            <person name="Reid J.F."/>
            <person name="Ring B.Z."/>
            <person name="Ringwald M."/>
            <person name="Rost B."/>
            <person name="Ruan Y."/>
            <person name="Salzberg S.L."/>
            <person name="Sandelin A."/>
            <person name="Schneider C."/>
            <person name="Schoenbach C."/>
            <person name="Sekiguchi K."/>
            <person name="Semple C.A."/>
            <person name="Seno S."/>
            <person name="Sessa L."/>
            <person name="Sheng Y."/>
            <person name="Shibata Y."/>
            <person name="Shimada H."/>
            <person name="Shimada K."/>
            <person name="Silva D."/>
            <person name="Sinclair B."/>
            <person name="Sperling S."/>
            <person name="Stupka E."/>
            <person name="Sugiura K."/>
            <person name="Sultana R."/>
            <person name="Takenaka Y."/>
            <person name="Taki K."/>
            <person name="Tammoja K."/>
            <person name="Tan S.L."/>
            <person name="Tang S."/>
            <person name="Taylor M.S."/>
            <person name="Tegner J."/>
            <person name="Teichmann S.A."/>
            <person name="Ueda H.R."/>
            <person name="van Nimwegen E."/>
            <person name="Verardo R."/>
            <person name="Wei C.L."/>
            <person name="Yagi K."/>
            <person name="Yamanishi H."/>
            <person name="Zabarovsky E."/>
            <person name="Zhu S."/>
            <person name="Zimmer A."/>
            <person name="Hide W."/>
            <person name="Bult C."/>
            <person name="Grimmond S.M."/>
            <person name="Teasdale R.D."/>
            <person name="Liu E.T."/>
            <person name="Brusic V."/>
            <person name="Quackenbush J."/>
            <person name="Wahlestedt C."/>
            <person name="Mattick J.S."/>
            <person name="Hume D.A."/>
            <person name="Kai C."/>
            <person name="Sasaki D."/>
            <person name="Tomaru Y."/>
            <person name="Fukuda S."/>
            <person name="Kanamori-Katayama M."/>
            <person name="Suzuki M."/>
            <person name="Aoki J."/>
            <person name="Arakawa T."/>
            <person name="Iida J."/>
            <person name="Imamura K."/>
            <person name="Itoh M."/>
            <person name="Kato T."/>
            <person name="Kawaji H."/>
            <person name="Kawagashira N."/>
            <person name="Kawashima T."/>
            <person name="Kojima M."/>
            <person name="Kondo S."/>
            <person name="Konno H."/>
            <person name="Nakano K."/>
            <person name="Ninomiya N."/>
            <person name="Nishio T."/>
            <person name="Okada M."/>
            <person name="Plessy C."/>
            <person name="Shibata K."/>
            <person name="Shiraki T."/>
            <person name="Suzuki S."/>
            <person name="Tagami M."/>
            <person name="Waki K."/>
            <person name="Watahiki A."/>
            <person name="Okamura-Oho Y."/>
            <person name="Suzuki H."/>
            <person name="Kawai J."/>
            <person name="Hayashizaki Y."/>
        </authorList>
    </citation>
    <scope>NUCLEOTIDE SEQUENCE [LARGE SCALE MRNA] (ISOFORM 2)</scope>
    <scope>NUCLEOTIDE SEQUENCE [LARGE SCALE MRNA] OF 485-1427 (ISOFORM 1)</scope>
    <source>
        <strain>C57BL/6J</strain>
        <tissue>Embryo</tissue>
        <tissue>Skin</tissue>
    </source>
</reference>
<reference key="3">
    <citation type="journal article" date="2004" name="Genome Res.">
        <title>The status, quality, and expansion of the NIH full-length cDNA project: the Mammalian Gene Collection (MGC).</title>
        <authorList>
            <consortium name="The MGC Project Team"/>
        </authorList>
    </citation>
    <scope>NUCLEOTIDE SEQUENCE [LARGE SCALE MRNA] (ISOFORM 1)</scope>
    <source>
        <strain>C57BL/6J</strain>
        <strain>FVB/N</strain>
        <tissue>Brain</tissue>
        <tissue>Mammary tumor</tissue>
    </source>
</reference>
<reference key="4">
    <citation type="journal article" date="2010" name="Cell">
        <title>A tissue-specific atlas of mouse protein phosphorylation and expression.</title>
        <authorList>
            <person name="Huttlin E.L."/>
            <person name="Jedrychowski M.P."/>
            <person name="Elias J.E."/>
            <person name="Goswami T."/>
            <person name="Rad R."/>
            <person name="Beausoleil S.A."/>
            <person name="Villen J."/>
            <person name="Haas W."/>
            <person name="Sowa M.E."/>
            <person name="Gygi S.P."/>
        </authorList>
    </citation>
    <scope>IDENTIFICATION BY MASS SPECTROMETRY [LARGE SCALE ANALYSIS]</scope>
    <source>
        <tissue>Brain</tissue>
        <tissue>Kidney</tissue>
        <tissue>Lung</tissue>
        <tissue>Spleen</tissue>
    </source>
</reference>
<reference key="5">
    <citation type="journal article" date="2014" name="Traffic">
        <title>Mammalian CORVET is required for fusion and conversion of distinct early endosome subpopulations.</title>
        <authorList>
            <person name="Perini E.D."/>
            <person name="Schaefer R."/>
            <person name="Stoeter M."/>
            <person name="Kalaidzidis Y."/>
            <person name="Zerial M."/>
        </authorList>
    </citation>
    <scope>INTERACTION WITH RAB5C</scope>
    <scope>SUBUNIT</scope>
</reference>
<feature type="chain" id="PRO_0000278268" description="Vacuolar protein sorting-associated protein 8 homolog">
    <location>
        <begin position="1"/>
        <end position="1427"/>
    </location>
</feature>
<feature type="repeat" description="WD">
    <location>
        <begin position="193"/>
        <end position="234"/>
    </location>
</feature>
<feature type="zinc finger region" description="RING-type; atypical" evidence="2">
    <location>
        <begin position="1257"/>
        <end position="1309"/>
    </location>
</feature>
<feature type="region of interest" description="Disordered" evidence="3">
    <location>
        <begin position="1311"/>
        <end position="1355"/>
    </location>
</feature>
<feature type="compositionally biased region" description="Polar residues" evidence="3">
    <location>
        <begin position="1329"/>
        <end position="1342"/>
    </location>
</feature>
<feature type="compositionally biased region" description="Basic and acidic residues" evidence="3">
    <location>
        <begin position="1343"/>
        <end position="1353"/>
    </location>
</feature>
<feature type="modified residue" description="Phosphoserine" evidence="1">
    <location>
        <position position="26"/>
    </location>
</feature>
<feature type="modified residue" description="Phosphoserine" evidence="1">
    <location>
        <position position="32"/>
    </location>
</feature>
<feature type="modified residue" description="Phosphoserine" evidence="1">
    <location>
        <position position="127"/>
    </location>
</feature>
<feature type="splice variant" id="VSP_023252" description="In isoform 3." evidence="5">
    <original>F</original>
    <variation>FGK</variation>
    <location>
        <position position="178"/>
    </location>
</feature>
<feature type="splice variant" id="VSP_023253" description="In isoform 3." evidence="5">
    <location>
        <begin position="965"/>
        <end position="994"/>
    </location>
</feature>
<feature type="splice variant" id="VSP_023254" description="In isoform 2." evidence="6">
    <original>SCGHLYHSFCLQSKE</original>
    <variation>RFLYWVTGASPIQPK</variation>
    <location>
        <begin position="1278"/>
        <end position="1292"/>
    </location>
</feature>
<feature type="splice variant" id="VSP_023255" description="In isoform 2." evidence="6">
    <location>
        <begin position="1293"/>
        <end position="1427"/>
    </location>
</feature>
<feature type="sequence conflict" description="In Ref. 2; BAC26237." evidence="7" ref="2">
    <original>R</original>
    <variation>G</variation>
    <location>
        <position position="591"/>
    </location>
</feature>
<proteinExistence type="evidence at protein level"/>
<name>VPS8_MOUSE</name>
<protein>
    <recommendedName>
        <fullName>Vacuolar protein sorting-associated protein 8 homolog</fullName>
    </recommendedName>
</protein>
<comment type="function">
    <text evidence="1">Plays a role in vesicle-mediated protein trafficking of the endocytic membrane transport pathway. Believed to act as a component of the putative CORVET endosomal tethering complexes which is proposed to be involved in the Rab5-to-Rab7 endosome conversion probably implicating MON1A/B, and via binding SNAREs and SNARE complexes to mediate tethering and docking events during SNARE-mediated membrane fusion. The CORVET complex is proposed to function as a Rab5 effector to mediate early endosome fusion probably in specific endosome subpopulations. Functions predominantly in APPL1-containing endosomes (By similarity).</text>
</comment>
<comment type="subunit">
    <text evidence="1 4 8">Interacts with RAB5C (PubMed:25266290). Interacts with TGFBRAP1 (By similarity). Component of the putative class C core vacuole/endosome tethering (CORVET) complex; the core of which is composed of the class C Vps proteins VPS11, VPS16, VPS18 and VPS33A, associated with VPS8 and TGFBRAP1 (PubMed:25266290).</text>
</comment>
<comment type="alternative products">
    <event type="alternative splicing"/>
    <isoform>
        <id>Q0P5W1-1</id>
        <name>1</name>
        <sequence type="displayed"/>
    </isoform>
    <isoform>
        <id>Q0P5W1-2</id>
        <name>2</name>
        <sequence type="described" ref="VSP_023254 VSP_023255"/>
    </isoform>
    <isoform>
        <id>Q0P5W1-3</id>
        <name>3</name>
        <sequence type="described" ref="VSP_023252 VSP_023253"/>
    </isoform>
</comment>
<comment type="similarity">
    <text evidence="7">Belongs to the VPS8 family.</text>
</comment>
<comment type="sequence caution" evidence="7">
    <conflict type="erroneous initiation">
        <sequence resource="EMBL-CDS" id="AAH32214"/>
    </conflict>
</comment>
<comment type="sequence caution" evidence="7">
    <conflict type="frameshift">
        <sequence resource="EMBL-CDS" id="BAC26237"/>
    </conflict>
</comment>
<comment type="sequence caution" evidence="7">
    <conflict type="erroneous initiation">
        <sequence resource="EMBL-CDS" id="BAC65657"/>
    </conflict>
</comment>
<evidence type="ECO:0000250" key="1">
    <source>
        <dbReference type="UniProtKB" id="Q8N3P4"/>
    </source>
</evidence>
<evidence type="ECO:0000255" key="2">
    <source>
        <dbReference type="PROSITE-ProRule" id="PRU00175"/>
    </source>
</evidence>
<evidence type="ECO:0000256" key="3">
    <source>
        <dbReference type="SAM" id="MobiDB-lite"/>
    </source>
</evidence>
<evidence type="ECO:0000269" key="4">
    <source>
    </source>
</evidence>
<evidence type="ECO:0000303" key="5">
    <source>
    </source>
</evidence>
<evidence type="ECO:0000303" key="6">
    <source>
    </source>
</evidence>
<evidence type="ECO:0000305" key="7"/>
<evidence type="ECO:0000305" key="8">
    <source>
    </source>
</evidence>